<comment type="function">
    <text evidence="3 4 6">Required for loading and maintenance of stable association of CDC45 with chromatin during initiation and elongation of DNA replication. Also involved in temporal regulation of origin firing. Required for the association of PSF1 with origins.</text>
</comment>
<comment type="subunit">
    <text evidence="3 6">Interacts with CDC45 and SLD7.</text>
</comment>
<comment type="interaction">
    <interactant intactId="EBI-23925">
        <id>P53135</id>
    </interactant>
    <interactant intactId="EBI-4292">
        <id>Q08032</id>
        <label>CDC45</label>
    </interactant>
    <organismsDiffer>false</organismsDiffer>
    <experiments>13</experiments>
</comment>
<comment type="interaction">
    <interactant intactId="EBI-23925">
        <id>P53135</id>
    </interactant>
    <interactant intactId="EBI-25984">
        <id>P47027</id>
        <label>DPB11</label>
    </interactant>
    <organismsDiffer>false</organismsDiffer>
    <experiments>9</experiments>
</comment>
<comment type="interaction">
    <interactant intactId="EBI-23925">
        <id>P53135</id>
    </interactant>
    <interactant intactId="EBI-17843">
        <id>P22216</id>
        <label>RAD53</label>
    </interactant>
    <organismsDiffer>false</organismsDiffer>
    <experiments>3</experiments>
</comment>
<comment type="interaction">
    <interactant intactId="EBI-23925">
        <id>P53135</id>
    </interactant>
    <interactant intactId="EBI-36267">
        <id>Q08457</id>
        <label>SLD7</label>
    </interactant>
    <organismsDiffer>false</organismsDiffer>
    <experiments>10</experiments>
</comment>
<comment type="subcellular location">
    <subcellularLocation>
        <location evidence="1">Nucleus</location>
    </subcellularLocation>
</comment>
<comment type="miscellaneous">
    <text evidence="5">Present with 125 molecules/cell in log phase SD medium.</text>
</comment>
<accession>P53135</accession>
<accession>D6VU34</accession>
<protein>
    <recommendedName>
        <fullName>DNA replication regulator SLD3</fullName>
    </recommendedName>
</protein>
<sequence length="668" mass="77298">METWEVIASVKEATKGLDLSLDHPLIIKSEDVPSNILQLLQQKNRRQLKHICMKSRKEYFLLEEYGPGFWVKWPYNYFNGYSLPERRTEVVTTVERERAKRETLKTWDELKFKELLHLWSEEPKGSCKLEKDKDLKLDMNPPDMKGESKINDYYSDPKEYIESKYYDALFSIHTPLAYFVKSNLVRLKNTCRTKYGSDSYKIAYQAMLQKFLLSIVQFKDRHDNRLLLEPFSSPIADEKRKNCLTKFVIQDENKNSSTIADLCVVLKSREIKLQILLLLEIIGLNDLDWNFRDFEKKYKLKLKKRSLNLTKKGLVRRRSKKKTSEKDKGIERITTSLDYCEQLDLYLDRACILDILLSSETPNPDAIEASNGTIQEHKKNILDKSKEASLVGFINYVLIPYFNKKVPHAVEFIIQKLKGPSMRPKRALKKVNDSTNVSSPNTVETYNRLSTSQRASRSSIINSVPSSPALRRVDANLFSRKSIASPTPELLNSRTNSNLNEFLESETRSLKRPSQLGRTKSDLTMNHLQKRQFSVSDLSTTRVPNSSTITLKTPFSHSTINAYKTMNNSFRRVGKRKDINETIRLHERVDSEENVQVQATPAVKKRTVTPNKKAQLQSIIESPLNFKDDDTHEGRKNTSNITSTPTNKPPENSSKRRVRRRLFAPEST</sequence>
<proteinExistence type="evidence at protein level"/>
<feature type="chain" id="PRO_0000071954" description="DNA replication regulator SLD3">
    <location>
        <begin position="1"/>
        <end position="668"/>
    </location>
</feature>
<feature type="region of interest" description="Disordered" evidence="2">
    <location>
        <begin position="429"/>
        <end position="450"/>
    </location>
</feature>
<feature type="region of interest" description="Disordered" evidence="2">
    <location>
        <begin position="621"/>
        <end position="668"/>
    </location>
</feature>
<feature type="compositionally biased region" description="Polar residues" evidence="2">
    <location>
        <begin position="433"/>
        <end position="450"/>
    </location>
</feature>
<feature type="compositionally biased region" description="Basic and acidic residues" evidence="2">
    <location>
        <begin position="626"/>
        <end position="636"/>
    </location>
</feature>
<feature type="compositionally biased region" description="Polar residues" evidence="2">
    <location>
        <begin position="637"/>
        <end position="652"/>
    </location>
</feature>
<feature type="helix" evidence="7">
    <location>
        <begin position="157"/>
        <end position="170"/>
    </location>
</feature>
<feature type="strand" evidence="8">
    <location>
        <begin position="172"/>
        <end position="174"/>
    </location>
</feature>
<feature type="helix" evidence="7">
    <location>
        <begin position="176"/>
        <end position="181"/>
    </location>
</feature>
<feature type="helix" evidence="7">
    <location>
        <begin position="183"/>
        <end position="195"/>
    </location>
</feature>
<feature type="turn" evidence="7">
    <location>
        <begin position="197"/>
        <end position="199"/>
    </location>
</feature>
<feature type="helix" evidence="7">
    <location>
        <begin position="200"/>
        <end position="209"/>
    </location>
</feature>
<feature type="helix" evidence="7">
    <location>
        <begin position="215"/>
        <end position="223"/>
    </location>
</feature>
<feature type="helix" evidence="7">
    <location>
        <begin position="226"/>
        <end position="228"/>
    </location>
</feature>
<feature type="helix" evidence="7">
    <location>
        <begin position="234"/>
        <end position="247"/>
    </location>
</feature>
<feature type="strand" evidence="8">
    <location>
        <begin position="250"/>
        <end position="253"/>
    </location>
</feature>
<feature type="helix" evidence="7">
    <location>
        <begin position="258"/>
        <end position="284"/>
    </location>
</feature>
<feature type="helix" evidence="7">
    <location>
        <begin position="288"/>
        <end position="291"/>
    </location>
</feature>
<feature type="helix" evidence="8">
    <location>
        <begin position="294"/>
        <end position="297"/>
    </location>
</feature>
<feature type="helix" evidence="8">
    <location>
        <begin position="299"/>
        <end position="312"/>
    </location>
</feature>
<feature type="helix" evidence="7">
    <location>
        <begin position="339"/>
        <end position="358"/>
    </location>
</feature>
<feature type="helix" evidence="7">
    <location>
        <begin position="373"/>
        <end position="380"/>
    </location>
</feature>
<feature type="helix" evidence="7">
    <location>
        <begin position="390"/>
        <end position="396"/>
    </location>
</feature>
<feature type="helix" evidence="7">
    <location>
        <begin position="398"/>
        <end position="402"/>
    </location>
</feature>
<feature type="strand" evidence="7">
    <location>
        <begin position="403"/>
        <end position="406"/>
    </location>
</feature>
<feature type="helix" evidence="7">
    <location>
        <begin position="407"/>
        <end position="417"/>
    </location>
</feature>
<gene>
    <name type="primary">SLD3</name>
    <name type="ordered locus">YGL113W</name>
    <name type="ORF">G2980</name>
</gene>
<evidence type="ECO:0000250" key="1"/>
<evidence type="ECO:0000256" key="2">
    <source>
        <dbReference type="SAM" id="MobiDB-lite"/>
    </source>
</evidence>
<evidence type="ECO:0000269" key="3">
    <source>
    </source>
</evidence>
<evidence type="ECO:0000269" key="4">
    <source>
    </source>
</evidence>
<evidence type="ECO:0000269" key="5">
    <source>
    </source>
</evidence>
<evidence type="ECO:0000269" key="6">
    <source>
    </source>
</evidence>
<evidence type="ECO:0007829" key="7">
    <source>
        <dbReference type="PDB" id="3WI3"/>
    </source>
</evidence>
<evidence type="ECO:0007829" key="8">
    <source>
        <dbReference type="PDB" id="8J09"/>
    </source>
</evidence>
<reference key="1">
    <citation type="journal article" date="1997" name="Nature">
        <title>The nucleotide sequence of Saccharomyces cerevisiae chromosome VII.</title>
        <authorList>
            <person name="Tettelin H."/>
            <person name="Agostoni-Carbone M.L."/>
            <person name="Albermann K."/>
            <person name="Albers M."/>
            <person name="Arroyo J."/>
            <person name="Backes U."/>
            <person name="Barreiros T."/>
            <person name="Bertani I."/>
            <person name="Bjourson A.J."/>
            <person name="Brueckner M."/>
            <person name="Bruschi C.V."/>
            <person name="Carignani G."/>
            <person name="Castagnoli L."/>
            <person name="Cerdan E."/>
            <person name="Clemente M.L."/>
            <person name="Coblenz A."/>
            <person name="Coglievina M."/>
            <person name="Coissac E."/>
            <person name="Defoor E."/>
            <person name="Del Bino S."/>
            <person name="Delius H."/>
            <person name="Delneri D."/>
            <person name="de Wergifosse P."/>
            <person name="Dujon B."/>
            <person name="Durand P."/>
            <person name="Entian K.-D."/>
            <person name="Eraso P."/>
            <person name="Escribano V."/>
            <person name="Fabiani L."/>
            <person name="Fartmann B."/>
            <person name="Feroli F."/>
            <person name="Feuermann M."/>
            <person name="Frontali L."/>
            <person name="Garcia-Gonzalez M."/>
            <person name="Garcia-Saez M.I."/>
            <person name="Goffeau A."/>
            <person name="Guerreiro P."/>
            <person name="Hani J."/>
            <person name="Hansen M."/>
            <person name="Hebling U."/>
            <person name="Hernandez K."/>
            <person name="Heumann K."/>
            <person name="Hilger F."/>
            <person name="Hofmann B."/>
            <person name="Indge K.J."/>
            <person name="James C.M."/>
            <person name="Klima R."/>
            <person name="Koetter P."/>
            <person name="Kramer B."/>
            <person name="Kramer W."/>
            <person name="Lauquin G."/>
            <person name="Leuther H."/>
            <person name="Louis E.J."/>
            <person name="Maillier E."/>
            <person name="Marconi A."/>
            <person name="Martegani E."/>
            <person name="Mazon M.J."/>
            <person name="Mazzoni C."/>
            <person name="McReynolds A.D.K."/>
            <person name="Melchioretto P."/>
            <person name="Mewes H.-W."/>
            <person name="Minenkova O."/>
            <person name="Mueller-Auer S."/>
            <person name="Nawrocki A."/>
            <person name="Netter P."/>
            <person name="Neu R."/>
            <person name="Nombela C."/>
            <person name="Oliver S.G."/>
            <person name="Panzeri L."/>
            <person name="Paoluzi S."/>
            <person name="Plevani P."/>
            <person name="Portetelle D."/>
            <person name="Portillo F."/>
            <person name="Potier S."/>
            <person name="Purnelle B."/>
            <person name="Rieger M."/>
            <person name="Riles L."/>
            <person name="Rinaldi T."/>
            <person name="Robben J."/>
            <person name="Rodrigues-Pousada C."/>
            <person name="Rodriguez-Belmonte E."/>
            <person name="Rodriguez-Torres A.M."/>
            <person name="Rose M."/>
            <person name="Ruzzi M."/>
            <person name="Saliola M."/>
            <person name="Sanchez-Perez M."/>
            <person name="Schaefer B."/>
            <person name="Schaefer M."/>
            <person name="Scharfe M."/>
            <person name="Schmidheini T."/>
            <person name="Schreer A."/>
            <person name="Skala J."/>
            <person name="Souciet J.-L."/>
            <person name="Steensma H.Y."/>
            <person name="Talla E."/>
            <person name="Thierry A."/>
            <person name="Vandenbol M."/>
            <person name="van der Aart Q.J.M."/>
            <person name="Van Dyck L."/>
            <person name="Vanoni M."/>
            <person name="Verhasselt P."/>
            <person name="Voet M."/>
            <person name="Volckaert G."/>
            <person name="Wambutt R."/>
            <person name="Watson M.D."/>
            <person name="Weber N."/>
            <person name="Wedler E."/>
            <person name="Wedler H."/>
            <person name="Wipfli P."/>
            <person name="Wolf K."/>
            <person name="Wright L.F."/>
            <person name="Zaccaria P."/>
            <person name="Zimmermann M."/>
            <person name="Zollner A."/>
            <person name="Kleine K."/>
        </authorList>
    </citation>
    <scope>NUCLEOTIDE SEQUENCE [LARGE SCALE GENOMIC DNA]</scope>
    <source>
        <strain>ATCC 204508 / S288c</strain>
    </source>
</reference>
<reference key="2">
    <citation type="journal article" date="2014" name="G3 (Bethesda)">
        <title>The reference genome sequence of Saccharomyces cerevisiae: Then and now.</title>
        <authorList>
            <person name="Engel S.R."/>
            <person name="Dietrich F.S."/>
            <person name="Fisk D.G."/>
            <person name="Binkley G."/>
            <person name="Balakrishnan R."/>
            <person name="Costanzo M.C."/>
            <person name="Dwight S.S."/>
            <person name="Hitz B.C."/>
            <person name="Karra K."/>
            <person name="Nash R.S."/>
            <person name="Weng S."/>
            <person name="Wong E.D."/>
            <person name="Lloyd P."/>
            <person name="Skrzypek M.S."/>
            <person name="Miyasato S.R."/>
            <person name="Simison M."/>
            <person name="Cherry J.M."/>
        </authorList>
    </citation>
    <scope>GENOME REANNOTATION</scope>
    <source>
        <strain>ATCC 204508 / S288c</strain>
    </source>
</reference>
<reference key="3">
    <citation type="journal article" date="1997" name="Yeast">
        <title>The genes encoding the transcription factor yTAFII60, the G4p1 protein and a putative glucose transporter are contained in a 12.3 kb DNA fragment on the left arm of Saccharomyces cerevisiae chromosome VII.</title>
        <authorList>
            <person name="Paoluzi S."/>
            <person name="Minenkova O."/>
            <person name="Castagnoli L."/>
        </authorList>
    </citation>
    <scope>NUCLEOTIDE SEQUENCE [GENOMIC DNA] OF 492-668</scope>
</reference>
<reference key="4">
    <citation type="journal article" date="2001" name="EMBO J.">
        <title>Sld3, which interacts with Cdc45 (Sld4), functions for chromosomal DNA replication in Saccharomyces cerevisiae.</title>
        <authorList>
            <person name="Kamimura Y."/>
            <person name="Tak Y.-S."/>
            <person name="Sugino A."/>
            <person name="Araki H."/>
        </authorList>
    </citation>
    <scope>FUNCTION</scope>
    <scope>INTERACTION WITH CDC45</scope>
</reference>
<reference key="5">
    <citation type="journal article" date="2003" name="Genes Dev.">
        <title>GINS, a novel multiprotein complex required for chromosomal DNA replication in budding yeast.</title>
        <authorList>
            <person name="Takayama Y."/>
            <person name="Kamimura Y."/>
            <person name="Okawa M."/>
            <person name="Muramatsu S."/>
            <person name="Sugino A."/>
            <person name="Araki H."/>
        </authorList>
    </citation>
    <scope>FUNCTION</scope>
</reference>
<reference key="6">
    <citation type="journal article" date="2003" name="Nature">
        <title>Global analysis of protein expression in yeast.</title>
        <authorList>
            <person name="Ghaemmaghami S."/>
            <person name="Huh W.-K."/>
            <person name="Bower K."/>
            <person name="Howson R.W."/>
            <person name="Belle A."/>
            <person name="Dephoure N."/>
            <person name="O'Shea E.K."/>
            <person name="Weissman J.S."/>
        </authorList>
    </citation>
    <scope>LEVEL OF PROTEIN EXPRESSION [LARGE SCALE ANALYSIS]</scope>
</reference>
<reference key="7">
    <citation type="journal article" date="2011" name="EMBO J.">
        <title>Sld7, an Sld3-associated protein required for efficient chromosomal DNA replication in budding yeast.</title>
        <authorList>
            <person name="Tanaka T."/>
            <person name="Umemori T."/>
            <person name="Endo S."/>
            <person name="Muramatsu S."/>
            <person name="Kanemaki M."/>
            <person name="Kamimura Y."/>
            <person name="Obuse C."/>
            <person name="Araki H."/>
        </authorList>
    </citation>
    <scope>FUNCTION</scope>
    <scope>INTERACTION WITH SLD7</scope>
</reference>
<name>SLD3_YEAST</name>
<organism>
    <name type="scientific">Saccharomyces cerevisiae (strain ATCC 204508 / S288c)</name>
    <name type="common">Baker's yeast</name>
    <dbReference type="NCBI Taxonomy" id="559292"/>
    <lineage>
        <taxon>Eukaryota</taxon>
        <taxon>Fungi</taxon>
        <taxon>Dikarya</taxon>
        <taxon>Ascomycota</taxon>
        <taxon>Saccharomycotina</taxon>
        <taxon>Saccharomycetes</taxon>
        <taxon>Saccharomycetales</taxon>
        <taxon>Saccharomycetaceae</taxon>
        <taxon>Saccharomyces</taxon>
    </lineage>
</organism>
<dbReference type="EMBL" id="Z72635">
    <property type="protein sequence ID" value="CAA96821.1"/>
    <property type="molecule type" value="Genomic_DNA"/>
</dbReference>
<dbReference type="EMBL" id="Z72634">
    <property type="protein sequence ID" value="CAA96820.1"/>
    <property type="molecule type" value="Genomic_DNA"/>
</dbReference>
<dbReference type="EMBL" id="X97644">
    <property type="protein sequence ID" value="CAA66239.1"/>
    <property type="molecule type" value="Genomic_DNA"/>
</dbReference>
<dbReference type="EMBL" id="BK006941">
    <property type="protein sequence ID" value="DAA07995.1"/>
    <property type="molecule type" value="Genomic_DNA"/>
</dbReference>
<dbReference type="PIR" id="S64123">
    <property type="entry name" value="S64123"/>
</dbReference>
<dbReference type="RefSeq" id="NP_011402.3">
    <property type="nucleotide sequence ID" value="NM_001180978.3"/>
</dbReference>
<dbReference type="PDB" id="3WI3">
    <property type="method" value="X-ray"/>
    <property type="resolution" value="2.40 A"/>
    <property type="chains" value="A/B/C=148-430"/>
</dbReference>
<dbReference type="PDB" id="8J09">
    <property type="method" value="X-ray"/>
    <property type="resolution" value="2.61 A"/>
    <property type="chains" value="A=154-420"/>
</dbReference>
<dbReference type="PDBsum" id="3WI3"/>
<dbReference type="PDBsum" id="8J09"/>
<dbReference type="SMR" id="P53135"/>
<dbReference type="BioGRID" id="33138">
    <property type="interactions" value="259"/>
</dbReference>
<dbReference type="ComplexPortal" id="CPX-1188">
    <property type="entry name" value="DPB11-SLD3-SLD2 DNA replication complex"/>
</dbReference>
<dbReference type="DIP" id="DIP-5481N"/>
<dbReference type="FunCoup" id="P53135">
    <property type="interactions" value="122"/>
</dbReference>
<dbReference type="IntAct" id="P53135">
    <property type="interactions" value="10"/>
</dbReference>
<dbReference type="MINT" id="P53135"/>
<dbReference type="STRING" id="4932.YGL113W"/>
<dbReference type="GlyGen" id="P53135">
    <property type="glycosylation" value="1 site, 1 O-linked glycan (1 site)"/>
</dbReference>
<dbReference type="iPTMnet" id="P53135"/>
<dbReference type="PaxDb" id="4932-YGL113W"/>
<dbReference type="PeptideAtlas" id="P53135"/>
<dbReference type="EnsemblFungi" id="YGL113W_mRNA">
    <property type="protein sequence ID" value="YGL113W"/>
    <property type="gene ID" value="YGL113W"/>
</dbReference>
<dbReference type="GeneID" id="852765"/>
<dbReference type="KEGG" id="sce:YGL113W"/>
<dbReference type="AGR" id="SGD:S000003081"/>
<dbReference type="SGD" id="S000003081">
    <property type="gene designation" value="SLD3"/>
</dbReference>
<dbReference type="VEuPathDB" id="FungiDB:YGL113W"/>
<dbReference type="eggNOG" id="ENOG502RE09">
    <property type="taxonomic scope" value="Eukaryota"/>
</dbReference>
<dbReference type="HOGENOM" id="CLU_409479_0_0_1"/>
<dbReference type="InParanoid" id="P53135"/>
<dbReference type="OMA" id="KNMCKAA"/>
<dbReference type="OrthoDB" id="5395343at2759"/>
<dbReference type="BioCyc" id="YEAST:G3O-30611-MONOMER"/>
<dbReference type="BioGRID-ORCS" id="852765">
    <property type="hits" value="2 hits in 10 CRISPR screens"/>
</dbReference>
<dbReference type="ChiTaRS" id="SLD3">
    <property type="organism name" value="yeast"/>
</dbReference>
<dbReference type="EvolutionaryTrace" id="P53135"/>
<dbReference type="PRO" id="PR:P53135"/>
<dbReference type="Proteomes" id="UP000002311">
    <property type="component" value="Chromosome VII"/>
</dbReference>
<dbReference type="RNAct" id="P53135">
    <property type="molecule type" value="protein"/>
</dbReference>
<dbReference type="GO" id="GO:0000785">
    <property type="term" value="C:chromatin"/>
    <property type="evidence" value="ECO:0000314"/>
    <property type="project" value="SGD"/>
</dbReference>
<dbReference type="GO" id="GO:0000775">
    <property type="term" value="C:chromosome, centromeric region"/>
    <property type="evidence" value="ECO:0000314"/>
    <property type="project" value="SGD"/>
</dbReference>
<dbReference type="GO" id="GO:0031261">
    <property type="term" value="C:DNA replication preinitiation complex"/>
    <property type="evidence" value="ECO:0000353"/>
    <property type="project" value="SGD"/>
</dbReference>
<dbReference type="GO" id="GO:0005634">
    <property type="term" value="C:nucleus"/>
    <property type="evidence" value="ECO:0007005"/>
    <property type="project" value="SGD"/>
</dbReference>
<dbReference type="GO" id="GO:0003682">
    <property type="term" value="F:chromatin binding"/>
    <property type="evidence" value="ECO:0000314"/>
    <property type="project" value="SGD"/>
</dbReference>
<dbReference type="GO" id="GO:0006260">
    <property type="term" value="P:DNA replication"/>
    <property type="evidence" value="ECO:0000315"/>
    <property type="project" value="SGD"/>
</dbReference>
<dbReference type="GO" id="GO:0006270">
    <property type="term" value="P:DNA replication initiation"/>
    <property type="evidence" value="ECO:0000315"/>
    <property type="project" value="SGD"/>
</dbReference>
<dbReference type="GO" id="GO:0000727">
    <property type="term" value="P:double-strand break repair via break-induced replication"/>
    <property type="evidence" value="ECO:0000315"/>
    <property type="project" value="SGD"/>
</dbReference>
<dbReference type="GO" id="GO:0033314">
    <property type="term" value="P:mitotic DNA replication checkpoint signaling"/>
    <property type="evidence" value="ECO:0000303"/>
    <property type="project" value="ComplexPortal"/>
</dbReference>
<dbReference type="GO" id="GO:1903466">
    <property type="term" value="P:regulation of mitotic DNA replication initiation"/>
    <property type="evidence" value="ECO:0000303"/>
    <property type="project" value="ComplexPortal"/>
</dbReference>
<dbReference type="FunFam" id="1.20.58.2130:FF:000002">
    <property type="entry name" value="DNA replication regulator SLD3"/>
    <property type="match status" value="1"/>
</dbReference>
<dbReference type="FunFam" id="1.20.58.2130:FF:000003">
    <property type="entry name" value="DNA replication regulator SLD3"/>
    <property type="match status" value="1"/>
</dbReference>
<dbReference type="Gene3D" id="1.20.58.2130">
    <property type="match status" value="2"/>
</dbReference>
<dbReference type="InterPro" id="IPR013948">
    <property type="entry name" value="DNA_replication_reg_Sld3_C"/>
</dbReference>
<dbReference type="InterPro" id="IPR042511">
    <property type="entry name" value="Sld3"/>
</dbReference>
<dbReference type="InterPro" id="IPR041393">
    <property type="entry name" value="Sld3_N"/>
</dbReference>
<dbReference type="PANTHER" id="PTHR28067">
    <property type="entry name" value="DNA REPLICATION REGULATOR SLD3"/>
    <property type="match status" value="1"/>
</dbReference>
<dbReference type="PANTHER" id="PTHR28067:SF1">
    <property type="entry name" value="DNA REPLICATION REGULATOR SLD3"/>
    <property type="match status" value="1"/>
</dbReference>
<dbReference type="Pfam" id="PF18523">
    <property type="entry name" value="Sld3_N"/>
    <property type="match status" value="1"/>
</dbReference>
<dbReference type="Pfam" id="PF08639">
    <property type="entry name" value="Sld3_STD"/>
    <property type="match status" value="1"/>
</dbReference>
<keyword id="KW-0002">3D-structure</keyword>
<keyword id="KW-0131">Cell cycle</keyword>
<keyword id="KW-0235">DNA replication</keyword>
<keyword id="KW-0539">Nucleus</keyword>
<keyword id="KW-1185">Reference proteome</keyword>